<name>PYRG_ECO7I</name>
<gene>
    <name evidence="1" type="primary">pyrG</name>
    <name type="ordered locus">ECIAI39_3199</name>
</gene>
<proteinExistence type="inferred from homology"/>
<protein>
    <recommendedName>
        <fullName evidence="1">CTP synthase</fullName>
        <ecNumber evidence="1">6.3.4.2</ecNumber>
    </recommendedName>
    <alternativeName>
        <fullName evidence="1">Cytidine 5'-triphosphate synthase</fullName>
    </alternativeName>
    <alternativeName>
        <fullName evidence="1">Cytidine triphosphate synthetase</fullName>
        <shortName evidence="1">CTP synthetase</shortName>
        <shortName evidence="1">CTPS</shortName>
    </alternativeName>
    <alternativeName>
        <fullName evidence="1">UTP--ammonia ligase</fullName>
    </alternativeName>
</protein>
<evidence type="ECO:0000255" key="1">
    <source>
        <dbReference type="HAMAP-Rule" id="MF_01227"/>
    </source>
</evidence>
<reference key="1">
    <citation type="journal article" date="2009" name="PLoS Genet.">
        <title>Organised genome dynamics in the Escherichia coli species results in highly diverse adaptive paths.</title>
        <authorList>
            <person name="Touchon M."/>
            <person name="Hoede C."/>
            <person name="Tenaillon O."/>
            <person name="Barbe V."/>
            <person name="Baeriswyl S."/>
            <person name="Bidet P."/>
            <person name="Bingen E."/>
            <person name="Bonacorsi S."/>
            <person name="Bouchier C."/>
            <person name="Bouvet O."/>
            <person name="Calteau A."/>
            <person name="Chiapello H."/>
            <person name="Clermont O."/>
            <person name="Cruveiller S."/>
            <person name="Danchin A."/>
            <person name="Diard M."/>
            <person name="Dossat C."/>
            <person name="Karoui M.E."/>
            <person name="Frapy E."/>
            <person name="Garry L."/>
            <person name="Ghigo J.M."/>
            <person name="Gilles A.M."/>
            <person name="Johnson J."/>
            <person name="Le Bouguenec C."/>
            <person name="Lescat M."/>
            <person name="Mangenot S."/>
            <person name="Martinez-Jehanne V."/>
            <person name="Matic I."/>
            <person name="Nassif X."/>
            <person name="Oztas S."/>
            <person name="Petit M.A."/>
            <person name="Pichon C."/>
            <person name="Rouy Z."/>
            <person name="Ruf C.S."/>
            <person name="Schneider D."/>
            <person name="Tourret J."/>
            <person name="Vacherie B."/>
            <person name="Vallenet D."/>
            <person name="Medigue C."/>
            <person name="Rocha E.P.C."/>
            <person name="Denamur E."/>
        </authorList>
    </citation>
    <scope>NUCLEOTIDE SEQUENCE [LARGE SCALE GENOMIC DNA]</scope>
    <source>
        <strain>IAI39 / ExPEC</strain>
    </source>
</reference>
<feature type="chain" id="PRO_1000139442" description="CTP synthase">
    <location>
        <begin position="1"/>
        <end position="545"/>
    </location>
</feature>
<feature type="domain" description="Glutamine amidotransferase type-1" evidence="1">
    <location>
        <begin position="291"/>
        <end position="542"/>
    </location>
</feature>
<feature type="region of interest" description="Amidoligase domain" evidence="1">
    <location>
        <begin position="1"/>
        <end position="266"/>
    </location>
</feature>
<feature type="active site" description="Nucleophile; for glutamine hydrolysis" evidence="1">
    <location>
        <position position="379"/>
    </location>
</feature>
<feature type="active site" evidence="1">
    <location>
        <position position="515"/>
    </location>
</feature>
<feature type="active site" evidence="1">
    <location>
        <position position="517"/>
    </location>
</feature>
<feature type="binding site" evidence="1">
    <location>
        <position position="14"/>
    </location>
    <ligand>
        <name>CTP</name>
        <dbReference type="ChEBI" id="CHEBI:37563"/>
        <note>allosteric inhibitor</note>
    </ligand>
</feature>
<feature type="binding site" evidence="1">
    <location>
        <position position="14"/>
    </location>
    <ligand>
        <name>UTP</name>
        <dbReference type="ChEBI" id="CHEBI:46398"/>
    </ligand>
</feature>
<feature type="binding site" evidence="1">
    <location>
        <begin position="15"/>
        <end position="20"/>
    </location>
    <ligand>
        <name>ATP</name>
        <dbReference type="ChEBI" id="CHEBI:30616"/>
    </ligand>
</feature>
<feature type="binding site" evidence="1">
    <location>
        <position position="72"/>
    </location>
    <ligand>
        <name>ATP</name>
        <dbReference type="ChEBI" id="CHEBI:30616"/>
    </ligand>
</feature>
<feature type="binding site" evidence="1">
    <location>
        <position position="72"/>
    </location>
    <ligand>
        <name>Mg(2+)</name>
        <dbReference type="ChEBI" id="CHEBI:18420"/>
    </ligand>
</feature>
<feature type="binding site" evidence="1">
    <location>
        <position position="140"/>
    </location>
    <ligand>
        <name>Mg(2+)</name>
        <dbReference type="ChEBI" id="CHEBI:18420"/>
    </ligand>
</feature>
<feature type="binding site" evidence="1">
    <location>
        <begin position="147"/>
        <end position="149"/>
    </location>
    <ligand>
        <name>CTP</name>
        <dbReference type="ChEBI" id="CHEBI:37563"/>
        <note>allosteric inhibitor</note>
    </ligand>
</feature>
<feature type="binding site" evidence="1">
    <location>
        <begin position="187"/>
        <end position="192"/>
    </location>
    <ligand>
        <name>CTP</name>
        <dbReference type="ChEBI" id="CHEBI:37563"/>
        <note>allosteric inhibitor</note>
    </ligand>
</feature>
<feature type="binding site" evidence="1">
    <location>
        <begin position="187"/>
        <end position="192"/>
    </location>
    <ligand>
        <name>UTP</name>
        <dbReference type="ChEBI" id="CHEBI:46398"/>
    </ligand>
</feature>
<feature type="binding site" evidence="1">
    <location>
        <position position="223"/>
    </location>
    <ligand>
        <name>CTP</name>
        <dbReference type="ChEBI" id="CHEBI:37563"/>
        <note>allosteric inhibitor</note>
    </ligand>
</feature>
<feature type="binding site" evidence="1">
    <location>
        <position position="223"/>
    </location>
    <ligand>
        <name>UTP</name>
        <dbReference type="ChEBI" id="CHEBI:46398"/>
    </ligand>
</feature>
<feature type="binding site" evidence="1">
    <location>
        <begin position="239"/>
        <end position="241"/>
    </location>
    <ligand>
        <name>ATP</name>
        <dbReference type="ChEBI" id="CHEBI:30616"/>
    </ligand>
</feature>
<feature type="binding site" evidence="1">
    <location>
        <position position="352"/>
    </location>
    <ligand>
        <name>L-glutamine</name>
        <dbReference type="ChEBI" id="CHEBI:58359"/>
    </ligand>
</feature>
<feature type="binding site" evidence="1">
    <location>
        <begin position="380"/>
        <end position="383"/>
    </location>
    <ligand>
        <name>L-glutamine</name>
        <dbReference type="ChEBI" id="CHEBI:58359"/>
    </ligand>
</feature>
<feature type="binding site" evidence="1">
    <location>
        <position position="403"/>
    </location>
    <ligand>
        <name>L-glutamine</name>
        <dbReference type="ChEBI" id="CHEBI:58359"/>
    </ligand>
</feature>
<feature type="binding site" evidence="1">
    <location>
        <position position="470"/>
    </location>
    <ligand>
        <name>L-glutamine</name>
        <dbReference type="ChEBI" id="CHEBI:58359"/>
    </ligand>
</feature>
<keyword id="KW-0067">ATP-binding</keyword>
<keyword id="KW-0315">Glutamine amidotransferase</keyword>
<keyword id="KW-0436">Ligase</keyword>
<keyword id="KW-0460">Magnesium</keyword>
<keyword id="KW-0479">Metal-binding</keyword>
<keyword id="KW-0547">Nucleotide-binding</keyword>
<keyword id="KW-0665">Pyrimidine biosynthesis</keyword>
<dbReference type="EC" id="6.3.4.2" evidence="1"/>
<dbReference type="EMBL" id="CU928164">
    <property type="protein sequence ID" value="CAR19318.1"/>
    <property type="molecule type" value="Genomic_DNA"/>
</dbReference>
<dbReference type="RefSeq" id="WP_000210878.1">
    <property type="nucleotide sequence ID" value="NC_011750.1"/>
</dbReference>
<dbReference type="RefSeq" id="YP_002409125.1">
    <property type="nucleotide sequence ID" value="NC_011750.1"/>
</dbReference>
<dbReference type="SMR" id="B7NV70"/>
<dbReference type="STRING" id="585057.ECIAI39_3199"/>
<dbReference type="MEROPS" id="C26.964"/>
<dbReference type="GeneID" id="93779218"/>
<dbReference type="KEGG" id="ect:ECIAI39_3199"/>
<dbReference type="PATRIC" id="fig|585057.6.peg.3322"/>
<dbReference type="HOGENOM" id="CLU_011675_5_0_6"/>
<dbReference type="UniPathway" id="UPA00159">
    <property type="reaction ID" value="UER00277"/>
</dbReference>
<dbReference type="Proteomes" id="UP000000749">
    <property type="component" value="Chromosome"/>
</dbReference>
<dbReference type="GO" id="GO:0005829">
    <property type="term" value="C:cytosol"/>
    <property type="evidence" value="ECO:0007669"/>
    <property type="project" value="TreeGrafter"/>
</dbReference>
<dbReference type="GO" id="GO:0005524">
    <property type="term" value="F:ATP binding"/>
    <property type="evidence" value="ECO:0007669"/>
    <property type="project" value="UniProtKB-KW"/>
</dbReference>
<dbReference type="GO" id="GO:0003883">
    <property type="term" value="F:CTP synthase activity"/>
    <property type="evidence" value="ECO:0007669"/>
    <property type="project" value="UniProtKB-UniRule"/>
</dbReference>
<dbReference type="GO" id="GO:0004359">
    <property type="term" value="F:glutaminase activity"/>
    <property type="evidence" value="ECO:0007669"/>
    <property type="project" value="RHEA"/>
</dbReference>
<dbReference type="GO" id="GO:0042802">
    <property type="term" value="F:identical protein binding"/>
    <property type="evidence" value="ECO:0007669"/>
    <property type="project" value="TreeGrafter"/>
</dbReference>
<dbReference type="GO" id="GO:0046872">
    <property type="term" value="F:metal ion binding"/>
    <property type="evidence" value="ECO:0007669"/>
    <property type="project" value="UniProtKB-KW"/>
</dbReference>
<dbReference type="GO" id="GO:0044210">
    <property type="term" value="P:'de novo' CTP biosynthetic process"/>
    <property type="evidence" value="ECO:0007669"/>
    <property type="project" value="UniProtKB-UniRule"/>
</dbReference>
<dbReference type="GO" id="GO:0019856">
    <property type="term" value="P:pyrimidine nucleobase biosynthetic process"/>
    <property type="evidence" value="ECO:0007669"/>
    <property type="project" value="TreeGrafter"/>
</dbReference>
<dbReference type="CDD" id="cd03113">
    <property type="entry name" value="CTPS_N"/>
    <property type="match status" value="1"/>
</dbReference>
<dbReference type="CDD" id="cd01746">
    <property type="entry name" value="GATase1_CTP_Synthase"/>
    <property type="match status" value="1"/>
</dbReference>
<dbReference type="FunFam" id="3.40.50.300:FF:000009">
    <property type="entry name" value="CTP synthase"/>
    <property type="match status" value="1"/>
</dbReference>
<dbReference type="FunFam" id="3.40.50.880:FF:000002">
    <property type="entry name" value="CTP synthase"/>
    <property type="match status" value="1"/>
</dbReference>
<dbReference type="Gene3D" id="3.40.50.880">
    <property type="match status" value="1"/>
</dbReference>
<dbReference type="Gene3D" id="3.40.50.300">
    <property type="entry name" value="P-loop containing nucleotide triphosphate hydrolases"/>
    <property type="match status" value="1"/>
</dbReference>
<dbReference type="HAMAP" id="MF_01227">
    <property type="entry name" value="PyrG"/>
    <property type="match status" value="1"/>
</dbReference>
<dbReference type="InterPro" id="IPR029062">
    <property type="entry name" value="Class_I_gatase-like"/>
</dbReference>
<dbReference type="InterPro" id="IPR004468">
    <property type="entry name" value="CTP_synthase"/>
</dbReference>
<dbReference type="InterPro" id="IPR017456">
    <property type="entry name" value="CTP_synthase_N"/>
</dbReference>
<dbReference type="InterPro" id="IPR017926">
    <property type="entry name" value="GATASE"/>
</dbReference>
<dbReference type="InterPro" id="IPR033828">
    <property type="entry name" value="GATase1_CTP_Synthase"/>
</dbReference>
<dbReference type="InterPro" id="IPR027417">
    <property type="entry name" value="P-loop_NTPase"/>
</dbReference>
<dbReference type="NCBIfam" id="NF003792">
    <property type="entry name" value="PRK05380.1"/>
    <property type="match status" value="1"/>
</dbReference>
<dbReference type="NCBIfam" id="TIGR00337">
    <property type="entry name" value="PyrG"/>
    <property type="match status" value="1"/>
</dbReference>
<dbReference type="PANTHER" id="PTHR11550">
    <property type="entry name" value="CTP SYNTHASE"/>
    <property type="match status" value="1"/>
</dbReference>
<dbReference type="PANTHER" id="PTHR11550:SF0">
    <property type="entry name" value="CTP SYNTHASE-RELATED"/>
    <property type="match status" value="1"/>
</dbReference>
<dbReference type="Pfam" id="PF06418">
    <property type="entry name" value="CTP_synth_N"/>
    <property type="match status" value="1"/>
</dbReference>
<dbReference type="Pfam" id="PF00117">
    <property type="entry name" value="GATase"/>
    <property type="match status" value="1"/>
</dbReference>
<dbReference type="SUPFAM" id="SSF52317">
    <property type="entry name" value="Class I glutamine amidotransferase-like"/>
    <property type="match status" value="1"/>
</dbReference>
<dbReference type="SUPFAM" id="SSF52540">
    <property type="entry name" value="P-loop containing nucleoside triphosphate hydrolases"/>
    <property type="match status" value="1"/>
</dbReference>
<dbReference type="PROSITE" id="PS51273">
    <property type="entry name" value="GATASE_TYPE_1"/>
    <property type="match status" value="1"/>
</dbReference>
<comment type="function">
    <text evidence="1">Catalyzes the ATP-dependent amination of UTP to CTP with either L-glutamine or ammonia as the source of nitrogen. Regulates intracellular CTP levels through interactions with the four ribonucleotide triphosphates.</text>
</comment>
<comment type="catalytic activity">
    <reaction evidence="1">
        <text>UTP + L-glutamine + ATP + H2O = CTP + L-glutamate + ADP + phosphate + 2 H(+)</text>
        <dbReference type="Rhea" id="RHEA:26426"/>
        <dbReference type="ChEBI" id="CHEBI:15377"/>
        <dbReference type="ChEBI" id="CHEBI:15378"/>
        <dbReference type="ChEBI" id="CHEBI:29985"/>
        <dbReference type="ChEBI" id="CHEBI:30616"/>
        <dbReference type="ChEBI" id="CHEBI:37563"/>
        <dbReference type="ChEBI" id="CHEBI:43474"/>
        <dbReference type="ChEBI" id="CHEBI:46398"/>
        <dbReference type="ChEBI" id="CHEBI:58359"/>
        <dbReference type="ChEBI" id="CHEBI:456216"/>
        <dbReference type="EC" id="6.3.4.2"/>
    </reaction>
</comment>
<comment type="catalytic activity">
    <reaction evidence="1">
        <text>L-glutamine + H2O = L-glutamate + NH4(+)</text>
        <dbReference type="Rhea" id="RHEA:15889"/>
        <dbReference type="ChEBI" id="CHEBI:15377"/>
        <dbReference type="ChEBI" id="CHEBI:28938"/>
        <dbReference type="ChEBI" id="CHEBI:29985"/>
        <dbReference type="ChEBI" id="CHEBI:58359"/>
    </reaction>
</comment>
<comment type="catalytic activity">
    <reaction evidence="1">
        <text>UTP + NH4(+) + ATP = CTP + ADP + phosphate + 2 H(+)</text>
        <dbReference type="Rhea" id="RHEA:16597"/>
        <dbReference type="ChEBI" id="CHEBI:15378"/>
        <dbReference type="ChEBI" id="CHEBI:28938"/>
        <dbReference type="ChEBI" id="CHEBI:30616"/>
        <dbReference type="ChEBI" id="CHEBI:37563"/>
        <dbReference type="ChEBI" id="CHEBI:43474"/>
        <dbReference type="ChEBI" id="CHEBI:46398"/>
        <dbReference type="ChEBI" id="CHEBI:456216"/>
    </reaction>
</comment>
<comment type="activity regulation">
    <text evidence="1">Allosterically activated by GTP, when glutamine is the substrate; GTP has no effect on the reaction when ammonia is the substrate. The allosteric effector GTP functions by stabilizing the protein conformation that binds the tetrahedral intermediate(s) formed during glutamine hydrolysis. Inhibited by the product CTP, via allosteric rather than competitive inhibition.</text>
</comment>
<comment type="pathway">
    <text evidence="1">Pyrimidine metabolism; CTP biosynthesis via de novo pathway; CTP from UDP: step 2/2.</text>
</comment>
<comment type="subunit">
    <text evidence="1">Homotetramer.</text>
</comment>
<comment type="miscellaneous">
    <text evidence="1">CTPSs have evolved a hybrid strategy for distinguishing between UTP and CTP. The overlapping regions of the product feedback inhibitory and substrate sites recognize a common feature in both compounds, the triphosphate moiety. To differentiate isosteric substrate and product pyrimidine rings, an additional pocket far from the expected kinase/ligase catalytic site, specifically recognizes the cytosine and ribose portions of the product inhibitor.</text>
</comment>
<comment type="similarity">
    <text evidence="1">Belongs to the CTP synthase family.</text>
</comment>
<organism>
    <name type="scientific">Escherichia coli O7:K1 (strain IAI39 / ExPEC)</name>
    <dbReference type="NCBI Taxonomy" id="585057"/>
    <lineage>
        <taxon>Bacteria</taxon>
        <taxon>Pseudomonadati</taxon>
        <taxon>Pseudomonadota</taxon>
        <taxon>Gammaproteobacteria</taxon>
        <taxon>Enterobacterales</taxon>
        <taxon>Enterobacteriaceae</taxon>
        <taxon>Escherichia</taxon>
    </lineage>
</organism>
<sequence length="545" mass="60374">MTTNYIFVTGGVVSSLGKGIAAASLAAILEARGLNVTIMKLDPYINVDPGTMSPIQHGEVFVTEDGAETDLDLGHYERFIRTKMSRRNNFTTGRIYSDVLRKERRGDYLGATVQVIPHITNAIKERVLEGGEGHDVVLVEIGGTVGDIESLPFLEAIRQMAVEIGREHTLFMHLTLVPYMAASGEVKTKPTQHSVKELLSIGIQPDILICRSDRAVPANERAKIALFCNVPEKAVISLKDVDSIYKIPGLLKSQGLDDYICKRFSLNCPEANLSEWEQVIFEEANPVSEVTIGMVGKYIELPDAYKSVIEALKHGGLKNRVSVNIKLIDSQDVETRGVEILKGLDAILVPGGFGYRGVEGMITTARFARENNIPYLGICLGMQVALIDYARHVANMENANSTEFVPDCKYPVVALITEWRDENGNVEVRSEKSDLGGTMRLGAQQCQLVDDSLVRQLYNAPTIVERHRHRYEVNNMLLKQIEDAGLRVAGRSGDDQLVEIIEVPNHPWFVACQFHPEFTSTPRDGHPLFAGFVKAASEFQKRQAK</sequence>
<accession>B7NV70</accession>